<name>VATF_MOUSE</name>
<keyword id="KW-0002">3D-structure</keyword>
<keyword id="KW-0968">Cytoplasmic vesicle</keyword>
<keyword id="KW-0903">Direct protein sequencing</keyword>
<keyword id="KW-0375">Hydrogen ion transport</keyword>
<keyword id="KW-0406">Ion transport</keyword>
<keyword id="KW-0472">Membrane</keyword>
<keyword id="KW-1185">Reference proteome</keyword>
<keyword id="KW-0770">Synapse</keyword>
<keyword id="KW-0813">Transport</keyword>
<reference key="1">
    <citation type="journal article" date="2005" name="Science">
        <title>The transcriptional landscape of the mammalian genome.</title>
        <authorList>
            <person name="Carninci P."/>
            <person name="Kasukawa T."/>
            <person name="Katayama S."/>
            <person name="Gough J."/>
            <person name="Frith M.C."/>
            <person name="Maeda N."/>
            <person name="Oyama R."/>
            <person name="Ravasi T."/>
            <person name="Lenhard B."/>
            <person name="Wells C."/>
            <person name="Kodzius R."/>
            <person name="Shimokawa K."/>
            <person name="Bajic V.B."/>
            <person name="Brenner S.E."/>
            <person name="Batalov S."/>
            <person name="Forrest A.R."/>
            <person name="Zavolan M."/>
            <person name="Davis M.J."/>
            <person name="Wilming L.G."/>
            <person name="Aidinis V."/>
            <person name="Allen J.E."/>
            <person name="Ambesi-Impiombato A."/>
            <person name="Apweiler R."/>
            <person name="Aturaliya R.N."/>
            <person name="Bailey T.L."/>
            <person name="Bansal M."/>
            <person name="Baxter L."/>
            <person name="Beisel K.W."/>
            <person name="Bersano T."/>
            <person name="Bono H."/>
            <person name="Chalk A.M."/>
            <person name="Chiu K.P."/>
            <person name="Choudhary V."/>
            <person name="Christoffels A."/>
            <person name="Clutterbuck D.R."/>
            <person name="Crowe M.L."/>
            <person name="Dalla E."/>
            <person name="Dalrymple B.P."/>
            <person name="de Bono B."/>
            <person name="Della Gatta G."/>
            <person name="di Bernardo D."/>
            <person name="Down T."/>
            <person name="Engstrom P."/>
            <person name="Fagiolini M."/>
            <person name="Faulkner G."/>
            <person name="Fletcher C.F."/>
            <person name="Fukushima T."/>
            <person name="Furuno M."/>
            <person name="Futaki S."/>
            <person name="Gariboldi M."/>
            <person name="Georgii-Hemming P."/>
            <person name="Gingeras T.R."/>
            <person name="Gojobori T."/>
            <person name="Green R.E."/>
            <person name="Gustincich S."/>
            <person name="Harbers M."/>
            <person name="Hayashi Y."/>
            <person name="Hensch T.K."/>
            <person name="Hirokawa N."/>
            <person name="Hill D."/>
            <person name="Huminiecki L."/>
            <person name="Iacono M."/>
            <person name="Ikeo K."/>
            <person name="Iwama A."/>
            <person name="Ishikawa T."/>
            <person name="Jakt M."/>
            <person name="Kanapin A."/>
            <person name="Katoh M."/>
            <person name="Kawasawa Y."/>
            <person name="Kelso J."/>
            <person name="Kitamura H."/>
            <person name="Kitano H."/>
            <person name="Kollias G."/>
            <person name="Krishnan S.P."/>
            <person name="Kruger A."/>
            <person name="Kummerfeld S.K."/>
            <person name="Kurochkin I.V."/>
            <person name="Lareau L.F."/>
            <person name="Lazarevic D."/>
            <person name="Lipovich L."/>
            <person name="Liu J."/>
            <person name="Liuni S."/>
            <person name="McWilliam S."/>
            <person name="Madan Babu M."/>
            <person name="Madera M."/>
            <person name="Marchionni L."/>
            <person name="Matsuda H."/>
            <person name="Matsuzawa S."/>
            <person name="Miki H."/>
            <person name="Mignone F."/>
            <person name="Miyake S."/>
            <person name="Morris K."/>
            <person name="Mottagui-Tabar S."/>
            <person name="Mulder N."/>
            <person name="Nakano N."/>
            <person name="Nakauchi H."/>
            <person name="Ng P."/>
            <person name="Nilsson R."/>
            <person name="Nishiguchi S."/>
            <person name="Nishikawa S."/>
            <person name="Nori F."/>
            <person name="Ohara O."/>
            <person name="Okazaki Y."/>
            <person name="Orlando V."/>
            <person name="Pang K.C."/>
            <person name="Pavan W.J."/>
            <person name="Pavesi G."/>
            <person name="Pesole G."/>
            <person name="Petrovsky N."/>
            <person name="Piazza S."/>
            <person name="Reed J."/>
            <person name="Reid J.F."/>
            <person name="Ring B.Z."/>
            <person name="Ringwald M."/>
            <person name="Rost B."/>
            <person name="Ruan Y."/>
            <person name="Salzberg S.L."/>
            <person name="Sandelin A."/>
            <person name="Schneider C."/>
            <person name="Schoenbach C."/>
            <person name="Sekiguchi K."/>
            <person name="Semple C.A."/>
            <person name="Seno S."/>
            <person name="Sessa L."/>
            <person name="Sheng Y."/>
            <person name="Shibata Y."/>
            <person name="Shimada H."/>
            <person name="Shimada K."/>
            <person name="Silva D."/>
            <person name="Sinclair B."/>
            <person name="Sperling S."/>
            <person name="Stupka E."/>
            <person name="Sugiura K."/>
            <person name="Sultana R."/>
            <person name="Takenaka Y."/>
            <person name="Taki K."/>
            <person name="Tammoja K."/>
            <person name="Tan S.L."/>
            <person name="Tang S."/>
            <person name="Taylor M.S."/>
            <person name="Tegner J."/>
            <person name="Teichmann S.A."/>
            <person name="Ueda H.R."/>
            <person name="van Nimwegen E."/>
            <person name="Verardo R."/>
            <person name="Wei C.L."/>
            <person name="Yagi K."/>
            <person name="Yamanishi H."/>
            <person name="Zabarovsky E."/>
            <person name="Zhu S."/>
            <person name="Zimmer A."/>
            <person name="Hide W."/>
            <person name="Bult C."/>
            <person name="Grimmond S.M."/>
            <person name="Teasdale R.D."/>
            <person name="Liu E.T."/>
            <person name="Brusic V."/>
            <person name="Quackenbush J."/>
            <person name="Wahlestedt C."/>
            <person name="Mattick J.S."/>
            <person name="Hume D.A."/>
            <person name="Kai C."/>
            <person name="Sasaki D."/>
            <person name="Tomaru Y."/>
            <person name="Fukuda S."/>
            <person name="Kanamori-Katayama M."/>
            <person name="Suzuki M."/>
            <person name="Aoki J."/>
            <person name="Arakawa T."/>
            <person name="Iida J."/>
            <person name="Imamura K."/>
            <person name="Itoh M."/>
            <person name="Kato T."/>
            <person name="Kawaji H."/>
            <person name="Kawagashira N."/>
            <person name="Kawashima T."/>
            <person name="Kojima M."/>
            <person name="Kondo S."/>
            <person name="Konno H."/>
            <person name="Nakano K."/>
            <person name="Ninomiya N."/>
            <person name="Nishio T."/>
            <person name="Okada M."/>
            <person name="Plessy C."/>
            <person name="Shibata K."/>
            <person name="Shiraki T."/>
            <person name="Suzuki S."/>
            <person name="Tagami M."/>
            <person name="Waki K."/>
            <person name="Watahiki A."/>
            <person name="Okamura-Oho Y."/>
            <person name="Suzuki H."/>
            <person name="Kawai J."/>
            <person name="Hayashizaki Y."/>
        </authorList>
    </citation>
    <scope>NUCLEOTIDE SEQUENCE [LARGE SCALE MRNA]</scope>
    <source>
        <strain>C57BL/6J</strain>
        <tissue>Bone marrow</tissue>
        <tissue>Embryo</tissue>
        <tissue>Pancreas</tissue>
    </source>
</reference>
<reference key="2">
    <citation type="journal article" date="2004" name="Genome Res.">
        <title>The status, quality, and expansion of the NIH full-length cDNA project: the Mammalian Gene Collection (MGC).</title>
        <authorList>
            <consortium name="The MGC Project Team"/>
        </authorList>
    </citation>
    <scope>NUCLEOTIDE SEQUENCE [LARGE SCALE MRNA]</scope>
    <source>
        <strain>C57BL/6J</strain>
        <tissue>Mammary tumor</tissue>
    </source>
</reference>
<reference key="3">
    <citation type="submission" date="2007-03" db="UniProtKB">
        <authorList>
            <person name="Lubec G."/>
            <person name="Klug S."/>
        </authorList>
    </citation>
    <scope>PROTEIN SEQUENCE OF 42-53</scope>
    <scope>IDENTIFICATION BY MASS SPECTROMETRY</scope>
    <source>
        <tissue>Hippocampus</tissue>
    </source>
</reference>
<reference key="4">
    <citation type="journal article" date="2010" name="Cell">
        <title>A tissue-specific atlas of mouse protein phosphorylation and expression.</title>
        <authorList>
            <person name="Huttlin E.L."/>
            <person name="Jedrychowski M.P."/>
            <person name="Elias J.E."/>
            <person name="Goswami T."/>
            <person name="Rad R."/>
            <person name="Beausoleil S.A."/>
            <person name="Villen J."/>
            <person name="Haas W."/>
            <person name="Sowa M.E."/>
            <person name="Gygi S.P."/>
        </authorList>
    </citation>
    <scope>IDENTIFICATION BY MASS SPECTROMETRY [LARGE SCALE ANALYSIS]</scope>
    <source>
        <tissue>Brain</tissue>
        <tissue>Kidney</tissue>
        <tissue>Testis</tissue>
    </source>
</reference>
<gene>
    <name type="primary">Atp6v1f</name>
    <name type="synonym">Atp6s14</name>
    <name type="synonym">Vatf</name>
</gene>
<feature type="chain" id="PRO_0000144800" description="V-type proton ATPase subunit F">
    <location>
        <begin position="1"/>
        <end position="119"/>
    </location>
</feature>
<feature type="sequence conflict" description="In Ref. 1; BAB22780." evidence="4" ref="1">
    <original>N</original>
    <variation>D</variation>
    <location>
        <position position="35"/>
    </location>
</feature>
<protein>
    <recommendedName>
        <fullName>V-type proton ATPase subunit F</fullName>
        <shortName>V-ATPase subunit F</shortName>
    </recommendedName>
    <alternativeName>
        <fullName>V-ATPase 14 kDa subunit</fullName>
    </alternativeName>
    <alternativeName>
        <fullName>Vacuolar proton pump subunit F</fullName>
    </alternativeName>
</protein>
<comment type="function">
    <text evidence="2 3">Subunit of the V1 complex of vacuolar(H+)-ATPase (V-ATPase), a multisubunit enzyme composed of a peripheral complex (V1) that hydrolyzes ATP and a membrane integral complex (V0) that translocates protons (By similarity). V-ATPase is responsible for acidifying and maintaining the pH of intracellular compartments and in some cell types, is targeted to the plasma membrane, where it is responsible for acidifying the extracellular environment (By similarity).</text>
</comment>
<comment type="subunit">
    <text evidence="2">V-ATPase is a heteromultimeric enzyme made up of two complexes: the ATP-hydrolytic V1 complex and the proton translocation V0 complex (By similarity). The V1 complex consists of three catalytic AB heterodimers that form a heterohexamer, three peripheral stalks each consisting of EG heterodimers, one central rotor including subunits D and F, and the regulatory subunits C and H (By similarity). The proton translocation complex V0 consists of the proton transport subunit a, a ring of proteolipid subunits c9c'', rotary subunit d, subunits e and f, and the accessory subunits ATP6AP1/Ac45 and ATP6AP2/PRR (By similarity).</text>
</comment>
<comment type="subcellular location">
    <subcellularLocation>
        <location evidence="1">Cytoplasmic vesicle</location>
        <location evidence="1">Secretory vesicle</location>
        <location evidence="1">Synaptic vesicle membrane</location>
        <topology evidence="4">Peripheral membrane protein</topology>
    </subcellularLocation>
    <subcellularLocation>
        <location evidence="1">Cytoplasmic vesicle</location>
        <location evidence="1">Clathrin-coated vesicle membrane</location>
        <topology evidence="4">Peripheral membrane protein</topology>
    </subcellularLocation>
</comment>
<comment type="similarity">
    <text evidence="4">Belongs to the V-ATPase F subunit family.</text>
</comment>
<evidence type="ECO:0000250" key="1">
    <source>
        <dbReference type="UniProtKB" id="P50408"/>
    </source>
</evidence>
<evidence type="ECO:0000250" key="2">
    <source>
        <dbReference type="UniProtKB" id="Q16864"/>
    </source>
</evidence>
<evidence type="ECO:0000250" key="3">
    <source>
        <dbReference type="UniProtKB" id="Q28029"/>
    </source>
</evidence>
<evidence type="ECO:0000305" key="4"/>
<accession>Q9D1K2</accession>
<accession>Q3U6X0</accession>
<sequence>MAGRGKLIAVIGDEDTVTGFLLGGIGELNKNRHPNFLVVEKDTTINEIEDTFRQFLNRDDIGIILINQYIAEMVRHALDAHQRSIPAVLEIPSKEHPYDAAKDSILRRAKGMFTAEDLR</sequence>
<proteinExistence type="evidence at protein level"/>
<dbReference type="EMBL" id="AK003419">
    <property type="protein sequence ID" value="BAB22780.1"/>
    <property type="molecule type" value="mRNA"/>
</dbReference>
<dbReference type="EMBL" id="AK007327">
    <property type="protein sequence ID" value="BAB24962.1"/>
    <property type="molecule type" value="mRNA"/>
</dbReference>
<dbReference type="EMBL" id="AK152153">
    <property type="protein sequence ID" value="BAE30988.1"/>
    <property type="molecule type" value="mRNA"/>
</dbReference>
<dbReference type="EMBL" id="AK152929">
    <property type="protein sequence ID" value="BAE31604.1"/>
    <property type="molecule type" value="mRNA"/>
</dbReference>
<dbReference type="EMBL" id="AK152959">
    <property type="protein sequence ID" value="BAE31622.1"/>
    <property type="molecule type" value="mRNA"/>
</dbReference>
<dbReference type="EMBL" id="BC016553">
    <property type="protein sequence ID" value="AAH16553.1"/>
    <property type="molecule type" value="mRNA"/>
</dbReference>
<dbReference type="CCDS" id="CCDS19960.1"/>
<dbReference type="RefSeq" id="NP_079657.1">
    <property type="nucleotide sequence ID" value="NM_025381.2"/>
</dbReference>
<dbReference type="PDB" id="9BRA">
    <property type="method" value="EM"/>
    <property type="resolution" value="4.30 A"/>
    <property type="chains" value="X=1-119"/>
</dbReference>
<dbReference type="PDB" id="9BRQ">
    <property type="method" value="EM"/>
    <property type="resolution" value="4.30 A"/>
    <property type="chains" value="X=1-119"/>
</dbReference>
<dbReference type="PDB" id="9BRR">
    <property type="method" value="EM"/>
    <property type="resolution" value="4.50 A"/>
    <property type="chains" value="X=1-119"/>
</dbReference>
<dbReference type="PDB" id="9BRS">
    <property type="method" value="EM"/>
    <property type="resolution" value="4.40 A"/>
    <property type="chains" value="X=1-119"/>
</dbReference>
<dbReference type="PDB" id="9BRT">
    <property type="method" value="EM"/>
    <property type="resolution" value="4.30 A"/>
    <property type="chains" value="X=1-119"/>
</dbReference>
<dbReference type="PDB" id="9BRU">
    <property type="method" value="EM"/>
    <property type="resolution" value="4.40 A"/>
    <property type="chains" value="X=1-119"/>
</dbReference>
<dbReference type="PDBsum" id="9BRA"/>
<dbReference type="PDBsum" id="9BRQ"/>
<dbReference type="PDBsum" id="9BRR"/>
<dbReference type="PDBsum" id="9BRS"/>
<dbReference type="PDBsum" id="9BRT"/>
<dbReference type="PDBsum" id="9BRU"/>
<dbReference type="EMDB" id="EMD-44839"/>
<dbReference type="EMDB" id="EMD-44840"/>
<dbReference type="EMDB" id="EMD-44841"/>
<dbReference type="EMDB" id="EMD-44842"/>
<dbReference type="EMDB" id="EMD-44843"/>
<dbReference type="EMDB" id="EMD-44844"/>
<dbReference type="SMR" id="Q9D1K2"/>
<dbReference type="BioGRID" id="211247">
    <property type="interactions" value="13"/>
</dbReference>
<dbReference type="FunCoup" id="Q9D1K2">
    <property type="interactions" value="1413"/>
</dbReference>
<dbReference type="IntAct" id="Q9D1K2">
    <property type="interactions" value="1"/>
</dbReference>
<dbReference type="STRING" id="10090.ENSMUSP00000004396"/>
<dbReference type="TCDB" id="3.A.2.2.6">
    <property type="family name" value="the h+- or na+-translocating f-type, v-type and a-type atpase (f-atpase) superfamily"/>
</dbReference>
<dbReference type="iPTMnet" id="Q9D1K2"/>
<dbReference type="PhosphoSitePlus" id="Q9D1K2"/>
<dbReference type="SwissPalm" id="Q9D1K2"/>
<dbReference type="REPRODUCTION-2DPAGE" id="Q9D1K2"/>
<dbReference type="jPOST" id="Q9D1K2"/>
<dbReference type="PaxDb" id="10090-ENSMUSP00000004396"/>
<dbReference type="PeptideAtlas" id="Q9D1K2"/>
<dbReference type="ProteomicsDB" id="297874"/>
<dbReference type="Pumba" id="Q9D1K2"/>
<dbReference type="TopDownProteomics" id="Q9D1K2"/>
<dbReference type="Antibodypedia" id="4025">
    <property type="antibodies" value="207 antibodies from 25 providers"/>
</dbReference>
<dbReference type="DNASU" id="66144"/>
<dbReference type="Ensembl" id="ENSMUST00000004396.13">
    <property type="protein sequence ID" value="ENSMUSP00000004396.7"/>
    <property type="gene ID" value="ENSMUSG00000004285.13"/>
</dbReference>
<dbReference type="GeneID" id="66144"/>
<dbReference type="KEGG" id="mmu:66144"/>
<dbReference type="UCSC" id="uc009bdp.1">
    <property type="organism name" value="mouse"/>
</dbReference>
<dbReference type="AGR" id="MGI:1913394"/>
<dbReference type="CTD" id="9296"/>
<dbReference type="MGI" id="MGI:1913394">
    <property type="gene designation" value="Atp6v1f"/>
</dbReference>
<dbReference type="VEuPathDB" id="HostDB:ENSMUSG00000004285"/>
<dbReference type="eggNOG" id="KOG3432">
    <property type="taxonomic scope" value="Eukaryota"/>
</dbReference>
<dbReference type="GeneTree" id="ENSGT00390000013208"/>
<dbReference type="HOGENOM" id="CLU_135754_0_0_1"/>
<dbReference type="InParanoid" id="Q9D1K2"/>
<dbReference type="OMA" id="IIICQHI"/>
<dbReference type="OrthoDB" id="10261947at2759"/>
<dbReference type="PhylomeDB" id="Q9D1K2"/>
<dbReference type="TreeFam" id="TF300080"/>
<dbReference type="Reactome" id="R-MMU-1222556">
    <property type="pathway name" value="ROS and RNS production in phagocytes"/>
</dbReference>
<dbReference type="Reactome" id="R-MMU-77387">
    <property type="pathway name" value="Insulin receptor recycling"/>
</dbReference>
<dbReference type="Reactome" id="R-MMU-917977">
    <property type="pathway name" value="Transferrin endocytosis and recycling"/>
</dbReference>
<dbReference type="Reactome" id="R-MMU-9639288">
    <property type="pathway name" value="Amino acids regulate mTORC1"/>
</dbReference>
<dbReference type="Reactome" id="R-MMU-983712">
    <property type="pathway name" value="Ion channel transport"/>
</dbReference>
<dbReference type="BioGRID-ORCS" id="66144">
    <property type="hits" value="27 hits in 77 CRISPR screens"/>
</dbReference>
<dbReference type="CD-CODE" id="CE726F99">
    <property type="entry name" value="Postsynaptic density"/>
</dbReference>
<dbReference type="ChiTaRS" id="Atp6v1f">
    <property type="organism name" value="mouse"/>
</dbReference>
<dbReference type="PRO" id="PR:Q9D1K2"/>
<dbReference type="Proteomes" id="UP000000589">
    <property type="component" value="Chromosome 6"/>
</dbReference>
<dbReference type="RNAct" id="Q9D1K2">
    <property type="molecule type" value="protein"/>
</dbReference>
<dbReference type="Bgee" id="ENSMUSG00000004285">
    <property type="expression patterns" value="Expressed in embryonic brain and 88 other cell types or tissues"/>
</dbReference>
<dbReference type="ExpressionAtlas" id="Q9D1K2">
    <property type="expression patterns" value="baseline and differential"/>
</dbReference>
<dbReference type="GO" id="GO:1904949">
    <property type="term" value="C:ATPase complex"/>
    <property type="evidence" value="ECO:0000266"/>
    <property type="project" value="MGI"/>
</dbReference>
<dbReference type="GO" id="GO:0030665">
    <property type="term" value="C:clathrin-coated vesicle membrane"/>
    <property type="evidence" value="ECO:0007669"/>
    <property type="project" value="UniProtKB-SubCell"/>
</dbReference>
<dbReference type="GO" id="GO:0033176">
    <property type="term" value="C:proton-transporting V-type ATPase complex"/>
    <property type="evidence" value="ECO:0000314"/>
    <property type="project" value="MGI"/>
</dbReference>
<dbReference type="GO" id="GO:0033180">
    <property type="term" value="C:proton-transporting V-type ATPase, V1 domain"/>
    <property type="evidence" value="ECO:0000266"/>
    <property type="project" value="MGI"/>
</dbReference>
<dbReference type="GO" id="GO:0030672">
    <property type="term" value="C:synaptic vesicle membrane"/>
    <property type="evidence" value="ECO:0007669"/>
    <property type="project" value="UniProtKB-SubCell"/>
</dbReference>
<dbReference type="GO" id="GO:0000221">
    <property type="term" value="C:vacuolar proton-transporting V-type ATPase, V1 domain"/>
    <property type="evidence" value="ECO:0000250"/>
    <property type="project" value="UniProtKB"/>
</dbReference>
<dbReference type="GO" id="GO:0046961">
    <property type="term" value="F:proton-transporting ATPase activity, rotational mechanism"/>
    <property type="evidence" value="ECO:0007669"/>
    <property type="project" value="InterPro"/>
</dbReference>
<dbReference type="GO" id="GO:0097401">
    <property type="term" value="P:synaptic vesicle lumen acidification"/>
    <property type="evidence" value="ECO:0000314"/>
    <property type="project" value="SynGO"/>
</dbReference>
<dbReference type="FunFam" id="3.40.50.10580:FF:000001">
    <property type="entry name" value="V-type proton ATPase subunit F"/>
    <property type="match status" value="1"/>
</dbReference>
<dbReference type="Gene3D" id="3.40.50.10580">
    <property type="entry name" value="ATPase, V1 complex, subunit F"/>
    <property type="match status" value="1"/>
</dbReference>
<dbReference type="InterPro" id="IPR008218">
    <property type="entry name" value="ATPase_V1-cplx_f_g_su"/>
</dbReference>
<dbReference type="InterPro" id="IPR005772">
    <property type="entry name" value="ATPase_V1-cplx_fsu_euk"/>
</dbReference>
<dbReference type="InterPro" id="IPR036906">
    <property type="entry name" value="ATPase_V1_fsu_sf"/>
</dbReference>
<dbReference type="NCBIfam" id="TIGR01101">
    <property type="entry name" value="V_ATP_synt_F"/>
    <property type="match status" value="1"/>
</dbReference>
<dbReference type="PANTHER" id="PTHR13861:SF2">
    <property type="entry name" value="V-TYPE PROTON ATPASE SUBUNIT F"/>
    <property type="match status" value="1"/>
</dbReference>
<dbReference type="PANTHER" id="PTHR13861">
    <property type="entry name" value="VACUOLAR ATP SYNTHASE SUBUNIT F"/>
    <property type="match status" value="1"/>
</dbReference>
<dbReference type="Pfam" id="PF01990">
    <property type="entry name" value="ATP-synt_F"/>
    <property type="match status" value="1"/>
</dbReference>
<dbReference type="PIRSF" id="PIRSF015945">
    <property type="entry name" value="ATPase_V1_F_euk"/>
    <property type="match status" value="1"/>
</dbReference>
<dbReference type="SUPFAM" id="SSF159468">
    <property type="entry name" value="AtpF-like"/>
    <property type="match status" value="1"/>
</dbReference>
<organism>
    <name type="scientific">Mus musculus</name>
    <name type="common">Mouse</name>
    <dbReference type="NCBI Taxonomy" id="10090"/>
    <lineage>
        <taxon>Eukaryota</taxon>
        <taxon>Metazoa</taxon>
        <taxon>Chordata</taxon>
        <taxon>Craniata</taxon>
        <taxon>Vertebrata</taxon>
        <taxon>Euteleostomi</taxon>
        <taxon>Mammalia</taxon>
        <taxon>Eutheria</taxon>
        <taxon>Euarchontoglires</taxon>
        <taxon>Glires</taxon>
        <taxon>Rodentia</taxon>
        <taxon>Myomorpha</taxon>
        <taxon>Muroidea</taxon>
        <taxon>Muridae</taxon>
        <taxon>Murinae</taxon>
        <taxon>Mus</taxon>
        <taxon>Mus</taxon>
    </lineage>
</organism>